<evidence type="ECO:0000250" key="1"/>
<evidence type="ECO:0000256" key="2">
    <source>
        <dbReference type="SAM" id="MobiDB-lite"/>
    </source>
</evidence>
<evidence type="ECO:0000305" key="3"/>
<gene>
    <name type="primary">HSF8</name>
</gene>
<sequence>MEPNSSGSGKAAVGDGGGGGAPMLQPAPAPAPMPSANAPPPFLVKTYDMVDDPSTDKIVSWSPTNNSFVVWDPPEFAKDLLPKYFKHNNFSSFVRQLNTYGFRKVDPDRWEFANEGFLRGQKHLLKSISRRKPAHGHAQQQQQPHGHAQQQMQPPGHSASVGACVEVGKFGLEEEVERLKRDKNVLMQELVRLRQQQQSTDNQLQGMVQRLQGMELRQQQMMSFLAKAVNSPGFLAQFVQQQNESNKRIAEGSKKRRIKQDIESQDPSVTPADGQIVKYQPGINEAAKAMLRELSKLDSSPRLENFSNSPESFLIGDGSPQSNASSGRVSGVTLQEVPPTSGKPLLNTASAIAGQSLLPATSEMQSSHLGTCSEIINNQLSNIIPLVGGEDLHPGSLSASDMIMPELSQLQGILPENNTDVIGCDSFMDTIAVEGKMGLDIGSLSPGADIDWQSGLLDEIQEFPSVGDPFWEKFLQSPSSPDAAMDDDISNTSETKPQINGWDKTQNMEHLTEQMGATNIKQQKHMI</sequence>
<organism>
    <name type="scientific">Solanum peruvianum</name>
    <name type="common">Peruvian tomato</name>
    <name type="synonym">Lycopersicon peruvianum</name>
    <dbReference type="NCBI Taxonomy" id="4082"/>
    <lineage>
        <taxon>Eukaryota</taxon>
        <taxon>Viridiplantae</taxon>
        <taxon>Streptophyta</taxon>
        <taxon>Embryophyta</taxon>
        <taxon>Tracheophyta</taxon>
        <taxon>Spermatophyta</taxon>
        <taxon>Magnoliopsida</taxon>
        <taxon>eudicotyledons</taxon>
        <taxon>Gunneridae</taxon>
        <taxon>Pentapetalae</taxon>
        <taxon>asterids</taxon>
        <taxon>lamiids</taxon>
        <taxon>Solanales</taxon>
        <taxon>Solanaceae</taxon>
        <taxon>Solanoideae</taxon>
        <taxon>Solaneae</taxon>
        <taxon>Solanum</taxon>
        <taxon>Solanum subgen. Lycopersicon</taxon>
    </lineage>
</organism>
<dbReference type="EMBL" id="X67600">
    <property type="protein sequence ID" value="CAA47869.1"/>
    <property type="molecule type" value="mRNA"/>
</dbReference>
<dbReference type="PIR" id="S25481">
    <property type="entry name" value="S25481"/>
</dbReference>
<dbReference type="SMR" id="P41153"/>
<dbReference type="GO" id="GO:0005634">
    <property type="term" value="C:nucleus"/>
    <property type="evidence" value="ECO:0007669"/>
    <property type="project" value="UniProtKB-SubCell"/>
</dbReference>
<dbReference type="GO" id="GO:0003700">
    <property type="term" value="F:DNA-binding transcription factor activity"/>
    <property type="evidence" value="ECO:0007669"/>
    <property type="project" value="InterPro"/>
</dbReference>
<dbReference type="GO" id="GO:0000978">
    <property type="term" value="F:RNA polymerase II cis-regulatory region sequence-specific DNA binding"/>
    <property type="evidence" value="ECO:0007669"/>
    <property type="project" value="TreeGrafter"/>
</dbReference>
<dbReference type="GO" id="GO:0034605">
    <property type="term" value="P:cellular response to heat"/>
    <property type="evidence" value="ECO:0007669"/>
    <property type="project" value="TreeGrafter"/>
</dbReference>
<dbReference type="GO" id="GO:0006357">
    <property type="term" value="P:regulation of transcription by RNA polymerase II"/>
    <property type="evidence" value="ECO:0007669"/>
    <property type="project" value="TreeGrafter"/>
</dbReference>
<dbReference type="FunFam" id="1.10.10.10:FF:000057">
    <property type="entry name" value="Heat shock transcription factor 1"/>
    <property type="match status" value="1"/>
</dbReference>
<dbReference type="Gene3D" id="1.10.10.10">
    <property type="entry name" value="Winged helix-like DNA-binding domain superfamily/Winged helix DNA-binding domain"/>
    <property type="match status" value="1"/>
</dbReference>
<dbReference type="InterPro" id="IPR000232">
    <property type="entry name" value="HSF_DNA-bd"/>
</dbReference>
<dbReference type="InterPro" id="IPR036388">
    <property type="entry name" value="WH-like_DNA-bd_sf"/>
</dbReference>
<dbReference type="InterPro" id="IPR036390">
    <property type="entry name" value="WH_DNA-bd_sf"/>
</dbReference>
<dbReference type="PANTHER" id="PTHR10015">
    <property type="entry name" value="HEAT SHOCK TRANSCRIPTION FACTOR"/>
    <property type="match status" value="1"/>
</dbReference>
<dbReference type="PANTHER" id="PTHR10015:SF436">
    <property type="entry name" value="HEAT STRESS TRANSCRIPTION FACTOR A-1D"/>
    <property type="match status" value="1"/>
</dbReference>
<dbReference type="Pfam" id="PF00447">
    <property type="entry name" value="HSF_DNA-bind"/>
    <property type="match status" value="1"/>
</dbReference>
<dbReference type="PRINTS" id="PR00056">
    <property type="entry name" value="HSFDOMAIN"/>
</dbReference>
<dbReference type="SMART" id="SM00415">
    <property type="entry name" value="HSF"/>
    <property type="match status" value="1"/>
</dbReference>
<dbReference type="SUPFAM" id="SSF46785">
    <property type="entry name" value="Winged helix' DNA-binding domain"/>
    <property type="match status" value="1"/>
</dbReference>
<dbReference type="PROSITE" id="PS00434">
    <property type="entry name" value="HSF_DOMAIN"/>
    <property type="match status" value="1"/>
</dbReference>
<feature type="chain" id="PRO_0000124592" description="Heat shock factor protein HSF8">
    <location>
        <begin position="1"/>
        <end position="527"/>
    </location>
</feature>
<feature type="DNA-binding region" evidence="1">
    <location>
        <begin position="39"/>
        <end position="133"/>
    </location>
</feature>
<feature type="region of interest" description="Disordered" evidence="2">
    <location>
        <begin position="1"/>
        <end position="37"/>
    </location>
</feature>
<feature type="region of interest" description="Disordered" evidence="2">
    <location>
        <begin position="130"/>
        <end position="160"/>
    </location>
</feature>
<feature type="region of interest" description="Disordered" evidence="2">
    <location>
        <begin position="243"/>
        <end position="275"/>
    </location>
</feature>
<feature type="region of interest" description="Disordered" evidence="2">
    <location>
        <begin position="300"/>
        <end position="343"/>
    </location>
</feature>
<feature type="region of interest" description="Disordered" evidence="2">
    <location>
        <begin position="476"/>
        <end position="501"/>
    </location>
</feature>
<feature type="compositionally biased region" description="Low complexity" evidence="2">
    <location>
        <begin position="1"/>
        <end position="13"/>
    </location>
</feature>
<feature type="compositionally biased region" description="Pro residues" evidence="2">
    <location>
        <begin position="25"/>
        <end position="37"/>
    </location>
</feature>
<feature type="compositionally biased region" description="Low complexity" evidence="2">
    <location>
        <begin position="136"/>
        <end position="157"/>
    </location>
</feature>
<feature type="compositionally biased region" description="Polar residues" evidence="2">
    <location>
        <begin position="319"/>
        <end position="328"/>
    </location>
</feature>
<feature type="compositionally biased region" description="Polar residues" evidence="2">
    <location>
        <begin position="491"/>
        <end position="501"/>
    </location>
</feature>
<keyword id="KW-0010">Activator</keyword>
<keyword id="KW-0238">DNA-binding</keyword>
<keyword id="KW-0539">Nucleus</keyword>
<keyword id="KW-0597">Phosphoprotein</keyword>
<keyword id="KW-0346">Stress response</keyword>
<keyword id="KW-0804">Transcription</keyword>
<keyword id="KW-0805">Transcription regulation</keyword>
<comment type="function">
    <text evidence="1">DNA-binding protein that specifically binds heat shock promoter elements (HSE) and activates transcription.</text>
</comment>
<comment type="subunit">
    <text>Homotrimer.</text>
</comment>
<comment type="subcellular location">
    <subcellularLocation>
        <location>Nucleus</location>
    </subcellularLocation>
</comment>
<comment type="PTM">
    <text evidence="1">Exhibits temperature-dependent phosphorylation.</text>
</comment>
<comment type="similarity">
    <text evidence="3">Belongs to the HSF family.</text>
</comment>
<accession>P41153</accession>
<proteinExistence type="evidence at transcript level"/>
<name>HSF8_SOLPE</name>
<protein>
    <recommendedName>
        <fullName>Heat shock factor protein HSF8</fullName>
    </recommendedName>
    <alternativeName>
        <fullName>Heat shock transcription factor 8</fullName>
        <shortName>HSTF 8</shortName>
    </alternativeName>
    <alternativeName>
        <fullName>Heat stress transcription factor</fullName>
    </alternativeName>
</protein>
<reference key="1">
    <citation type="journal article" date="1993" name="Plant Physiol.">
        <title>Two cDNAs for tomato heat stress transcription factors.</title>
        <authorList>
            <person name="Scharf K.D."/>
            <person name="Rose S."/>
            <person name="Thierfelder J."/>
            <person name="Nover L."/>
        </authorList>
    </citation>
    <scope>NUCLEOTIDE SEQUENCE [MRNA]</scope>
</reference>